<name>SYC_ECOBW</name>
<reference key="1">
    <citation type="journal article" date="2009" name="J. Bacteriol.">
        <title>Genomic sequencing reveals regulatory mutations and recombinational events in the widely used MC4100 lineage of Escherichia coli K-12.</title>
        <authorList>
            <person name="Ferenci T."/>
            <person name="Zhou Z."/>
            <person name="Betteridge T."/>
            <person name="Ren Y."/>
            <person name="Liu Y."/>
            <person name="Feng L."/>
            <person name="Reeves P.R."/>
            <person name="Wang L."/>
        </authorList>
    </citation>
    <scope>NUCLEOTIDE SEQUENCE [LARGE SCALE GENOMIC DNA]</scope>
    <source>
        <strain>K12 / MC4100 / BW2952</strain>
    </source>
</reference>
<organism>
    <name type="scientific">Escherichia coli (strain K12 / MC4100 / BW2952)</name>
    <dbReference type="NCBI Taxonomy" id="595496"/>
    <lineage>
        <taxon>Bacteria</taxon>
        <taxon>Pseudomonadati</taxon>
        <taxon>Pseudomonadota</taxon>
        <taxon>Gammaproteobacteria</taxon>
        <taxon>Enterobacterales</taxon>
        <taxon>Enterobacteriaceae</taxon>
        <taxon>Escherichia</taxon>
    </lineage>
</organism>
<proteinExistence type="inferred from homology"/>
<feature type="chain" id="PRO_1000202120" description="Cysteine--tRNA ligase">
    <location>
        <begin position="1"/>
        <end position="461"/>
    </location>
</feature>
<feature type="short sequence motif" description="'HIGH' region">
    <location>
        <begin position="30"/>
        <end position="40"/>
    </location>
</feature>
<feature type="short sequence motif" description="'KMSKS' region">
    <location>
        <begin position="266"/>
        <end position="270"/>
    </location>
</feature>
<feature type="binding site" evidence="1">
    <location>
        <position position="28"/>
    </location>
    <ligand>
        <name>Zn(2+)</name>
        <dbReference type="ChEBI" id="CHEBI:29105"/>
    </ligand>
</feature>
<feature type="binding site" evidence="1">
    <location>
        <position position="209"/>
    </location>
    <ligand>
        <name>Zn(2+)</name>
        <dbReference type="ChEBI" id="CHEBI:29105"/>
    </ligand>
</feature>
<feature type="binding site" evidence="1">
    <location>
        <position position="234"/>
    </location>
    <ligand>
        <name>Zn(2+)</name>
        <dbReference type="ChEBI" id="CHEBI:29105"/>
    </ligand>
</feature>
<feature type="binding site" evidence="1">
    <location>
        <position position="238"/>
    </location>
    <ligand>
        <name>Zn(2+)</name>
        <dbReference type="ChEBI" id="CHEBI:29105"/>
    </ligand>
</feature>
<feature type="binding site" evidence="1">
    <location>
        <position position="269"/>
    </location>
    <ligand>
        <name>ATP</name>
        <dbReference type="ChEBI" id="CHEBI:30616"/>
    </ligand>
</feature>
<gene>
    <name evidence="1" type="primary">cysS</name>
    <name type="ordered locus">BWG_0401</name>
</gene>
<accession>C4ZUX4</accession>
<dbReference type="EC" id="6.1.1.16" evidence="1"/>
<dbReference type="EMBL" id="CP001396">
    <property type="protein sequence ID" value="ACR62695.1"/>
    <property type="molecule type" value="Genomic_DNA"/>
</dbReference>
<dbReference type="RefSeq" id="WP_000912385.1">
    <property type="nucleotide sequence ID" value="NC_012759.1"/>
</dbReference>
<dbReference type="SMR" id="C4ZUX4"/>
<dbReference type="KEGG" id="ebw:BWG_0401"/>
<dbReference type="HOGENOM" id="CLU_013528_0_1_6"/>
<dbReference type="GO" id="GO:0005829">
    <property type="term" value="C:cytosol"/>
    <property type="evidence" value="ECO:0007669"/>
    <property type="project" value="TreeGrafter"/>
</dbReference>
<dbReference type="GO" id="GO:0005524">
    <property type="term" value="F:ATP binding"/>
    <property type="evidence" value="ECO:0007669"/>
    <property type="project" value="UniProtKB-UniRule"/>
</dbReference>
<dbReference type="GO" id="GO:0004817">
    <property type="term" value="F:cysteine-tRNA ligase activity"/>
    <property type="evidence" value="ECO:0007669"/>
    <property type="project" value="UniProtKB-UniRule"/>
</dbReference>
<dbReference type="GO" id="GO:0008270">
    <property type="term" value="F:zinc ion binding"/>
    <property type="evidence" value="ECO:0007669"/>
    <property type="project" value="UniProtKB-UniRule"/>
</dbReference>
<dbReference type="GO" id="GO:0006423">
    <property type="term" value="P:cysteinyl-tRNA aminoacylation"/>
    <property type="evidence" value="ECO:0007669"/>
    <property type="project" value="UniProtKB-UniRule"/>
</dbReference>
<dbReference type="CDD" id="cd07963">
    <property type="entry name" value="Anticodon_Ia_Cys"/>
    <property type="match status" value="1"/>
</dbReference>
<dbReference type="CDD" id="cd00672">
    <property type="entry name" value="CysRS_core"/>
    <property type="match status" value="1"/>
</dbReference>
<dbReference type="FunFam" id="1.20.120.1910:FF:000001">
    <property type="entry name" value="Cysteine--tRNA ligase"/>
    <property type="match status" value="1"/>
</dbReference>
<dbReference type="FunFam" id="3.40.50.620:FF:000009">
    <property type="entry name" value="Cysteine--tRNA ligase"/>
    <property type="match status" value="1"/>
</dbReference>
<dbReference type="Gene3D" id="1.20.120.1910">
    <property type="entry name" value="Cysteine-tRNA ligase, C-terminal anti-codon recognition domain"/>
    <property type="match status" value="1"/>
</dbReference>
<dbReference type="Gene3D" id="3.40.50.620">
    <property type="entry name" value="HUPs"/>
    <property type="match status" value="1"/>
</dbReference>
<dbReference type="HAMAP" id="MF_00041">
    <property type="entry name" value="Cys_tRNA_synth"/>
    <property type="match status" value="1"/>
</dbReference>
<dbReference type="InterPro" id="IPR015803">
    <property type="entry name" value="Cys-tRNA-ligase"/>
</dbReference>
<dbReference type="InterPro" id="IPR015273">
    <property type="entry name" value="Cys-tRNA-synt_Ia_DALR"/>
</dbReference>
<dbReference type="InterPro" id="IPR024909">
    <property type="entry name" value="Cys-tRNA/MSH_ligase"/>
</dbReference>
<dbReference type="InterPro" id="IPR056411">
    <property type="entry name" value="CysS_C"/>
</dbReference>
<dbReference type="InterPro" id="IPR014729">
    <property type="entry name" value="Rossmann-like_a/b/a_fold"/>
</dbReference>
<dbReference type="InterPro" id="IPR032678">
    <property type="entry name" value="tRNA-synt_1_cat_dom"/>
</dbReference>
<dbReference type="InterPro" id="IPR009080">
    <property type="entry name" value="tRNAsynth_Ia_anticodon-bd"/>
</dbReference>
<dbReference type="NCBIfam" id="TIGR00435">
    <property type="entry name" value="cysS"/>
    <property type="match status" value="1"/>
</dbReference>
<dbReference type="PANTHER" id="PTHR10890:SF3">
    <property type="entry name" value="CYSTEINE--TRNA LIGASE, CYTOPLASMIC"/>
    <property type="match status" value="1"/>
</dbReference>
<dbReference type="PANTHER" id="PTHR10890">
    <property type="entry name" value="CYSTEINYL-TRNA SYNTHETASE"/>
    <property type="match status" value="1"/>
</dbReference>
<dbReference type="Pfam" id="PF23493">
    <property type="entry name" value="CysS_C"/>
    <property type="match status" value="1"/>
</dbReference>
<dbReference type="Pfam" id="PF09190">
    <property type="entry name" value="DALR_2"/>
    <property type="match status" value="1"/>
</dbReference>
<dbReference type="Pfam" id="PF01406">
    <property type="entry name" value="tRNA-synt_1e"/>
    <property type="match status" value="1"/>
</dbReference>
<dbReference type="PRINTS" id="PR00983">
    <property type="entry name" value="TRNASYNTHCYS"/>
</dbReference>
<dbReference type="SMART" id="SM00840">
    <property type="entry name" value="DALR_2"/>
    <property type="match status" value="1"/>
</dbReference>
<dbReference type="SUPFAM" id="SSF47323">
    <property type="entry name" value="Anticodon-binding domain of a subclass of class I aminoacyl-tRNA synthetases"/>
    <property type="match status" value="1"/>
</dbReference>
<dbReference type="SUPFAM" id="SSF52374">
    <property type="entry name" value="Nucleotidylyl transferase"/>
    <property type="match status" value="1"/>
</dbReference>
<protein>
    <recommendedName>
        <fullName evidence="1">Cysteine--tRNA ligase</fullName>
        <ecNumber evidence="1">6.1.1.16</ecNumber>
    </recommendedName>
    <alternativeName>
        <fullName evidence="1">Cysteinyl-tRNA synthetase</fullName>
        <shortName evidence="1">CysRS</shortName>
    </alternativeName>
</protein>
<keyword id="KW-0030">Aminoacyl-tRNA synthetase</keyword>
<keyword id="KW-0067">ATP-binding</keyword>
<keyword id="KW-0963">Cytoplasm</keyword>
<keyword id="KW-0436">Ligase</keyword>
<keyword id="KW-0479">Metal-binding</keyword>
<keyword id="KW-0547">Nucleotide-binding</keyword>
<keyword id="KW-0648">Protein biosynthesis</keyword>
<keyword id="KW-0862">Zinc</keyword>
<sequence length="461" mass="52202">MLKIFNTLTRQKEEFKPIHAGEVGMYVCGITVYDLCHIGHGRTFVAFDVVARYLRFLGYKLKYVRNITDIDDKIIKRANENGESFVAMVDRMIAEMHKDFDALNILRPDMEPRATHHIAEIIELTEQLIAKGHAYVADNGDVMFDVPTDPTYGVLSRQDLDQLQAGARVDVVDDKRNPMDFVLWKMSKEGEPSWPSPWGAGRPGWHIECSAMNCKQLGNHFDIHGGGSDLMFPHHENEIAQSTCAHDGQYVNYWMHSGMVMVDREKMSKSLGNFFTVRDVLKYYDAETVRYFLMSGHYRSQLNYSEENLKQARAALERLYTALRGTDKTVAPAGGEAFEARFIEAMDDDFNTPEAYSVLFDMAREVNRLKAEDMAAANAMASHLRKLSAVLGLLEQEPEAFLQSGAQADDSEVAEIEALIQQRLDARKAKDWAAADAARDRLNEMGIVLEDGPQGTTWRRK</sequence>
<evidence type="ECO:0000255" key="1">
    <source>
        <dbReference type="HAMAP-Rule" id="MF_00041"/>
    </source>
</evidence>
<comment type="catalytic activity">
    <reaction evidence="1">
        <text>tRNA(Cys) + L-cysteine + ATP = L-cysteinyl-tRNA(Cys) + AMP + diphosphate</text>
        <dbReference type="Rhea" id="RHEA:17773"/>
        <dbReference type="Rhea" id="RHEA-COMP:9661"/>
        <dbReference type="Rhea" id="RHEA-COMP:9679"/>
        <dbReference type="ChEBI" id="CHEBI:30616"/>
        <dbReference type="ChEBI" id="CHEBI:33019"/>
        <dbReference type="ChEBI" id="CHEBI:35235"/>
        <dbReference type="ChEBI" id="CHEBI:78442"/>
        <dbReference type="ChEBI" id="CHEBI:78517"/>
        <dbReference type="ChEBI" id="CHEBI:456215"/>
        <dbReference type="EC" id="6.1.1.16"/>
    </reaction>
</comment>
<comment type="cofactor">
    <cofactor evidence="1">
        <name>Zn(2+)</name>
        <dbReference type="ChEBI" id="CHEBI:29105"/>
    </cofactor>
    <text evidence="1">Binds 1 zinc ion per subunit.</text>
</comment>
<comment type="subunit">
    <text evidence="1">Monomer.</text>
</comment>
<comment type="subcellular location">
    <subcellularLocation>
        <location evidence="1">Cytoplasm</location>
    </subcellularLocation>
</comment>
<comment type="similarity">
    <text evidence="1">Belongs to the class-I aminoacyl-tRNA synthetase family.</text>
</comment>